<dbReference type="EC" id="2.7.11.17" evidence="4 5 6"/>
<dbReference type="EMBL" id="AB016838">
    <property type="protein sequence ID" value="BAA77824.4"/>
    <property type="molecule type" value="mRNA"/>
</dbReference>
<dbReference type="EMBL" id="BX284603">
    <property type="protein sequence ID" value="CCD63131.1"/>
    <property type="molecule type" value="Genomic_DNA"/>
</dbReference>
<dbReference type="EMBL" id="BX284603">
    <property type="protein sequence ID" value="CCD63132.1"/>
    <property type="molecule type" value="Genomic_DNA"/>
</dbReference>
<dbReference type="PIR" id="T37317">
    <property type="entry name" value="T37317"/>
</dbReference>
<dbReference type="RefSeq" id="NP_001021152.1">
    <molecule id="Q3Y416-2"/>
    <property type="nucleotide sequence ID" value="NM_001025981.3"/>
</dbReference>
<dbReference type="RefSeq" id="NP_001021153.1">
    <molecule id="Q3Y416-1"/>
    <property type="nucleotide sequence ID" value="NM_001025982.5"/>
</dbReference>
<dbReference type="PDB" id="1IQ5">
    <property type="method" value="X-ray"/>
    <property type="resolution" value="1.80 A"/>
    <property type="chains" value="B=440-466"/>
</dbReference>
<dbReference type="PDBsum" id="1IQ5"/>
<dbReference type="SMR" id="Q3Y416"/>
<dbReference type="FunCoup" id="Q3Y416">
    <property type="interactions" value="764"/>
</dbReference>
<dbReference type="STRING" id="6239.C05H8.1b.1"/>
<dbReference type="PaxDb" id="6239-C05H8.1b"/>
<dbReference type="EnsemblMetazoa" id="C05H8.1a.1">
    <molecule id="Q3Y416-2"/>
    <property type="protein sequence ID" value="C05H8.1a.1"/>
    <property type="gene ID" value="WBGene00000518"/>
</dbReference>
<dbReference type="EnsemblMetazoa" id="C05H8.1b.1">
    <molecule id="Q3Y416-1"/>
    <property type="protein sequence ID" value="C05H8.1b.1"/>
    <property type="gene ID" value="WBGene00000518"/>
</dbReference>
<dbReference type="GeneID" id="182278"/>
<dbReference type="KEGG" id="cel:CELE_C05H8.1"/>
<dbReference type="UCSC" id="C05H8.1b">
    <molecule id="Q3Y416-1"/>
    <property type="organism name" value="c. elegans"/>
</dbReference>
<dbReference type="AGR" id="WB:WBGene00000518"/>
<dbReference type="CTD" id="182278"/>
<dbReference type="WormBase" id="C05H8.1a">
    <molecule id="Q3Y416-2"/>
    <property type="protein sequence ID" value="CE33594"/>
    <property type="gene ID" value="WBGene00000518"/>
    <property type="gene designation" value="ckk-1"/>
</dbReference>
<dbReference type="WormBase" id="C05H8.1b">
    <molecule id="Q3Y416-1"/>
    <property type="protein sequence ID" value="CE37082"/>
    <property type="gene ID" value="WBGene00000518"/>
    <property type="gene designation" value="ckk-1"/>
</dbReference>
<dbReference type="eggNOG" id="KOG0585">
    <property type="taxonomic scope" value="Eukaryota"/>
</dbReference>
<dbReference type="GeneTree" id="ENSGT00940000154890"/>
<dbReference type="InParanoid" id="Q3Y416"/>
<dbReference type="OMA" id="TLCGLEY"/>
<dbReference type="OrthoDB" id="68483at2759"/>
<dbReference type="PhylomeDB" id="Q3Y416"/>
<dbReference type="Reactome" id="R-CEL-111932">
    <property type="pathway name" value="CaMK IV-mediated phosphorylation of CREB"/>
</dbReference>
<dbReference type="Reactome" id="R-CEL-442729">
    <property type="pathway name" value="CREB1 phosphorylation through the activation of CaMKII/CaMKK/CaMKIV cascasde"/>
</dbReference>
<dbReference type="Reactome" id="R-CEL-9619229">
    <property type="pathway name" value="Activation of RAC1 downstream of NMDARs"/>
</dbReference>
<dbReference type="EvolutionaryTrace" id="Q3Y416"/>
<dbReference type="PRO" id="PR:Q3Y416"/>
<dbReference type="Proteomes" id="UP000001940">
    <property type="component" value="Chromosome III"/>
</dbReference>
<dbReference type="Bgee" id="WBGene00000518">
    <property type="expression patterns" value="Expressed in larva and 3 other cell types or tissues"/>
</dbReference>
<dbReference type="GO" id="GO:0005737">
    <property type="term" value="C:cytoplasm"/>
    <property type="evidence" value="ECO:0000314"/>
    <property type="project" value="WormBase"/>
</dbReference>
<dbReference type="GO" id="GO:0005634">
    <property type="term" value="C:nucleus"/>
    <property type="evidence" value="ECO:0000314"/>
    <property type="project" value="WormBase"/>
</dbReference>
<dbReference type="GO" id="GO:0005524">
    <property type="term" value="F:ATP binding"/>
    <property type="evidence" value="ECO:0007669"/>
    <property type="project" value="UniProtKB-KW"/>
</dbReference>
<dbReference type="GO" id="GO:0004683">
    <property type="term" value="F:calcium/calmodulin-dependent protein kinase activity"/>
    <property type="evidence" value="ECO:0000314"/>
    <property type="project" value="WormBase"/>
</dbReference>
<dbReference type="GO" id="GO:0005516">
    <property type="term" value="F:calmodulin binding"/>
    <property type="evidence" value="ECO:0000314"/>
    <property type="project" value="WormBase"/>
</dbReference>
<dbReference type="GO" id="GO:0046872">
    <property type="term" value="F:metal ion binding"/>
    <property type="evidence" value="ECO:0007669"/>
    <property type="project" value="UniProtKB-KW"/>
</dbReference>
<dbReference type="GO" id="GO:0106310">
    <property type="term" value="F:protein serine kinase activity"/>
    <property type="evidence" value="ECO:0007669"/>
    <property type="project" value="RHEA"/>
</dbReference>
<dbReference type="GO" id="GO:0004674">
    <property type="term" value="F:protein serine/threonine kinase activity"/>
    <property type="evidence" value="ECO:0000318"/>
    <property type="project" value="GO_Central"/>
</dbReference>
<dbReference type="GO" id="GO:0019722">
    <property type="term" value="P:calcium-mediated signaling"/>
    <property type="evidence" value="ECO:0000304"/>
    <property type="project" value="WormBase"/>
</dbReference>
<dbReference type="GO" id="GO:0061762">
    <property type="term" value="P:CAMKK-AMPK signaling cascade"/>
    <property type="evidence" value="ECO:0000318"/>
    <property type="project" value="GO_Central"/>
</dbReference>
<dbReference type="CDD" id="cd14118">
    <property type="entry name" value="STKc_CAMKK"/>
    <property type="match status" value="1"/>
</dbReference>
<dbReference type="FunFam" id="3.30.200.20:FF:000429">
    <property type="entry name" value="Calcium/calmodulin-dependent protein kinase kinase"/>
    <property type="match status" value="1"/>
</dbReference>
<dbReference type="FunFam" id="1.10.510.10:FF:000571">
    <property type="entry name" value="Maternal embryonic leucine zipper kinase"/>
    <property type="match status" value="1"/>
</dbReference>
<dbReference type="Gene3D" id="3.30.200.20">
    <property type="entry name" value="Phosphorylase Kinase, domain 1"/>
    <property type="match status" value="1"/>
</dbReference>
<dbReference type="Gene3D" id="1.10.510.10">
    <property type="entry name" value="Transferase(Phosphotransferase) domain 1"/>
    <property type="match status" value="1"/>
</dbReference>
<dbReference type="InterPro" id="IPR011009">
    <property type="entry name" value="Kinase-like_dom_sf"/>
</dbReference>
<dbReference type="InterPro" id="IPR000719">
    <property type="entry name" value="Prot_kinase_dom"/>
</dbReference>
<dbReference type="InterPro" id="IPR017441">
    <property type="entry name" value="Protein_kinase_ATP_BS"/>
</dbReference>
<dbReference type="InterPro" id="IPR008271">
    <property type="entry name" value="Ser/Thr_kinase_AS"/>
</dbReference>
<dbReference type="PANTHER" id="PTHR24346">
    <property type="entry name" value="MAP/MICROTUBULE AFFINITY-REGULATING KINASE"/>
    <property type="match status" value="1"/>
</dbReference>
<dbReference type="PANTHER" id="PTHR24346:SF77">
    <property type="entry name" value="SERINE THREONINE PROTEIN KINASE"/>
    <property type="match status" value="1"/>
</dbReference>
<dbReference type="Pfam" id="PF00069">
    <property type="entry name" value="Pkinase"/>
    <property type="match status" value="1"/>
</dbReference>
<dbReference type="SMART" id="SM00220">
    <property type="entry name" value="S_TKc"/>
    <property type="match status" value="1"/>
</dbReference>
<dbReference type="SUPFAM" id="SSF56112">
    <property type="entry name" value="Protein kinase-like (PK-like)"/>
    <property type="match status" value="1"/>
</dbReference>
<dbReference type="PROSITE" id="PS00107">
    <property type="entry name" value="PROTEIN_KINASE_ATP"/>
    <property type="match status" value="1"/>
</dbReference>
<dbReference type="PROSITE" id="PS50011">
    <property type="entry name" value="PROTEIN_KINASE_DOM"/>
    <property type="match status" value="1"/>
</dbReference>
<dbReference type="PROSITE" id="PS00108">
    <property type="entry name" value="PROTEIN_KINASE_ST"/>
    <property type="match status" value="1"/>
</dbReference>
<feature type="chain" id="PRO_0000435388" description="Calcium/calmodulin-dependent protein kinase kinase" evidence="10">
    <location>
        <begin position="1"/>
        <end position="541"/>
    </location>
</feature>
<feature type="domain" description="Protein kinase" evidence="2">
    <location>
        <begin position="130"/>
        <end position="411"/>
    </location>
</feature>
<feature type="region of interest" description="Disordered" evidence="3">
    <location>
        <begin position="83"/>
        <end position="106"/>
    </location>
</feature>
<feature type="region of interest" description="RP domain" evidence="1">
    <location>
        <begin position="169"/>
        <end position="190"/>
    </location>
</feature>
<feature type="region of interest" description="Autoinhibitory domain" evidence="1">
    <location>
        <begin position="437"/>
        <end position="442"/>
    </location>
</feature>
<feature type="region of interest" description="Calmodulin-binding" evidence="1">
    <location>
        <begin position="440"/>
        <end position="465"/>
    </location>
</feature>
<feature type="region of interest" description="Disordered" evidence="3">
    <location>
        <begin position="462"/>
        <end position="512"/>
    </location>
</feature>
<feature type="compositionally biased region" description="Polar residues" evidence="3">
    <location>
        <begin position="93"/>
        <end position="106"/>
    </location>
</feature>
<feature type="compositionally biased region" description="Low complexity" evidence="3">
    <location>
        <begin position="497"/>
        <end position="507"/>
    </location>
</feature>
<feature type="active site" description="Proton acceptor" evidence="2">
    <location>
        <position position="276"/>
    </location>
</feature>
<feature type="binding site" evidence="2">
    <location>
        <begin position="136"/>
        <end position="144"/>
    </location>
    <ligand>
        <name>ATP</name>
        <dbReference type="ChEBI" id="CHEBI:30616"/>
    </ligand>
</feature>
<feature type="binding site" evidence="2">
    <location>
        <position position="159"/>
    </location>
    <ligand>
        <name>ATP</name>
        <dbReference type="ChEBI" id="CHEBI:30616"/>
    </ligand>
</feature>
<feature type="splice variant" id="VSP_058065" description="In isoform a." evidence="10">
    <original>MKNTFARYSLTIPSIPENVISHLRQWNEWMVGDTSDDSPGPSSTVSTMTTTGTVDRRSLLSAASMVRQQSDTTGVRRLVRARAVQEDDEAGPHSSNNLAATMSPNLSRPTRYVK</original>
    <variation>MYTFQ</variation>
    <location>
        <begin position="1"/>
        <end position="114"/>
    </location>
</feature>
<feature type="helix" evidence="15">
    <location>
        <begin position="446"/>
        <end position="458"/>
    </location>
</feature>
<feature type="strand" evidence="15">
    <location>
        <begin position="460"/>
        <end position="462"/>
    </location>
</feature>
<proteinExistence type="evidence at protein level"/>
<comment type="function">
    <text evidence="4 5 6 7">Calcium/calmodulin-dependent protein kinase which phosphorylates cmk-1 (PubMed:10336483, PubMed:10428833, PubMed:12231504, PubMed:29875264). Component of a calcium-triggered signaling cascade involved in CRE-mediated transcriptional activation, probably through cmk-1-mediated crh-1/CREB phosphorylation (PubMed:12231504). Plays a role in salt-avoidance learning behavior via the phosphorylation of cmk-1 (PubMed:29875264).</text>
</comment>
<comment type="catalytic activity">
    <reaction evidence="4 5 6">
        <text>L-seryl-[protein] + ATP = O-phospho-L-seryl-[protein] + ADP + H(+)</text>
        <dbReference type="Rhea" id="RHEA:17989"/>
        <dbReference type="Rhea" id="RHEA-COMP:9863"/>
        <dbReference type="Rhea" id="RHEA-COMP:11604"/>
        <dbReference type="ChEBI" id="CHEBI:15378"/>
        <dbReference type="ChEBI" id="CHEBI:29999"/>
        <dbReference type="ChEBI" id="CHEBI:30616"/>
        <dbReference type="ChEBI" id="CHEBI:83421"/>
        <dbReference type="ChEBI" id="CHEBI:456216"/>
        <dbReference type="EC" id="2.7.11.17"/>
    </reaction>
</comment>
<comment type="catalytic activity">
    <reaction evidence="4 5 6">
        <text>L-threonyl-[protein] + ATP = O-phospho-L-threonyl-[protein] + ADP + H(+)</text>
        <dbReference type="Rhea" id="RHEA:46608"/>
        <dbReference type="Rhea" id="RHEA-COMP:11060"/>
        <dbReference type="Rhea" id="RHEA-COMP:11605"/>
        <dbReference type="ChEBI" id="CHEBI:15378"/>
        <dbReference type="ChEBI" id="CHEBI:30013"/>
        <dbReference type="ChEBI" id="CHEBI:30616"/>
        <dbReference type="ChEBI" id="CHEBI:61977"/>
        <dbReference type="ChEBI" id="CHEBI:456216"/>
        <dbReference type="EC" id="2.7.11.17"/>
    </reaction>
</comment>
<comment type="cofactor">
    <cofactor evidence="4 5 6">
        <name>Mg(2+)</name>
        <dbReference type="ChEBI" id="CHEBI:18420"/>
    </cofactor>
</comment>
<comment type="activity regulation">
    <text evidence="1 4 5">Activated by Ca(2+)/calmodulin (PubMed:10336483, PubMed:10428833). Binding of calmodulin may relieve intrasteric autoinhibition (By similarity).</text>
</comment>
<comment type="subcellular location">
    <subcellularLocation>
        <location evidence="8">Cytoplasm</location>
    </subcellularLocation>
</comment>
<comment type="alternative products">
    <event type="alternative splicing"/>
    <isoform>
        <id>Q3Y416-1</id>
        <name evidence="14">b</name>
        <sequence type="displayed"/>
    </isoform>
    <isoform>
        <id>Q3Y416-2</id>
        <name evidence="13">a</name>
        <sequence type="described" ref="VSP_058065"/>
    </isoform>
</comment>
<comment type="tissue specificity">
    <text evidence="6">Expressed in head and tail neurons and vulval muscles.</text>
</comment>
<comment type="domain">
    <text evidence="1">The autoinhibitory domain overlaps with the calmodulin binding region and may be involved in intrasteric autoinhibition.</text>
</comment>
<comment type="domain">
    <text evidence="1">The RP domain (arginine/proline-rich) is involved in the recognition of substrates such as cmk-1.</text>
</comment>
<comment type="disruption phenotype">
    <text evidence="7">Defective in salt-avoidance learning.</text>
</comment>
<comment type="similarity">
    <text evidence="2">Belongs to the protein kinase superfamily. Ser/Thr protein kinase family.</text>
</comment>
<organism evidence="12">
    <name type="scientific">Caenorhabditis elegans</name>
    <dbReference type="NCBI Taxonomy" id="6239"/>
    <lineage>
        <taxon>Eukaryota</taxon>
        <taxon>Metazoa</taxon>
        <taxon>Ecdysozoa</taxon>
        <taxon>Nematoda</taxon>
        <taxon>Chromadorea</taxon>
        <taxon>Rhabditida</taxon>
        <taxon>Rhabditina</taxon>
        <taxon>Rhabditomorpha</taxon>
        <taxon>Rhabditoidea</taxon>
        <taxon>Rhabditidae</taxon>
        <taxon>Peloderinae</taxon>
        <taxon>Caenorhabditis</taxon>
    </lineage>
</organism>
<accession>Q3Y416</accession>
<accession>G4RS26</accession>
<accession>G5EDZ4</accession>
<keyword id="KW-0002">3D-structure</keyword>
<keyword id="KW-0025">Alternative splicing</keyword>
<keyword id="KW-0067">ATP-binding</keyword>
<keyword id="KW-0112">Calmodulin-binding</keyword>
<keyword id="KW-0963">Cytoplasm</keyword>
<keyword id="KW-0418">Kinase</keyword>
<keyword id="KW-0460">Magnesium</keyword>
<keyword id="KW-0479">Metal-binding</keyword>
<keyword id="KW-0547">Nucleotide-binding</keyword>
<keyword id="KW-1185">Reference proteome</keyword>
<keyword id="KW-0723">Serine/threonine-protein kinase</keyword>
<keyword id="KW-0808">Transferase</keyword>
<gene>
    <name evidence="14" type="primary">ckk-1</name>
    <name evidence="14" type="ORF">C05H8.1</name>
</gene>
<reference evidence="11" key="1">
    <citation type="journal article" date="1999" name="J. Biol. Chem.">
        <title>Substrate recognition by Ca2+/Calmodulin-dependent protein kinase kinase. Role of the arg-pro-rich insert domain.</title>
        <authorList>
            <person name="Tokumitsu H."/>
            <person name="Takahashi N."/>
            <person name="Eto K."/>
            <person name="Yano S."/>
            <person name="Soderling T.R."/>
            <person name="Muramatsu M.-A."/>
        </authorList>
    </citation>
    <scope>NUCLEOTIDE SEQUENCE [MRNA] (ISOFORM A)</scope>
    <scope>FUNCTION</scope>
    <scope>CATALYTIC ACTIVITY</scope>
    <scope>COFACTOR</scope>
    <scope>ACTIVITY REGULATION</scope>
    <source>
        <strain evidence="11">Bristol N2</strain>
    </source>
</reference>
<reference evidence="12" key="2">
    <citation type="journal article" date="1998" name="Science">
        <title>Genome sequence of the nematode C. elegans: a platform for investigating biology.</title>
        <authorList>
            <consortium name="The C. elegans sequencing consortium"/>
        </authorList>
    </citation>
    <scope>NUCLEOTIDE SEQUENCE [LARGE SCALE GENOMIC DNA]</scope>
    <source>
        <strain evidence="12">Bristol N2</strain>
    </source>
</reference>
<reference evidence="11" key="3">
    <citation type="journal article" date="1996" name="J. Biol. Chem.">
        <title>Multiple Ca(2+)-calmodulin-dependent protein kinase kinases from rat brain. Purification, regulation by Ca(2+)-calmodulin, and partial amino acid sequence.</title>
        <authorList>
            <person name="Edelman A.M."/>
            <person name="Mitchelhill K.I."/>
            <person name="Selbert M.A."/>
            <person name="Anderson K.A."/>
            <person name="Hook S.S."/>
            <person name="Stapleton D."/>
            <person name="Goldstein E.G."/>
            <person name="Means A.R."/>
            <person name="Kemp B.E."/>
        </authorList>
    </citation>
    <scope>IDENTIFICATION</scope>
    <source>
        <strain evidence="11">Bristol N2</strain>
    </source>
</reference>
<reference evidence="10" key="4">
    <citation type="journal article" date="1999" name="J. Biol. Chem.">
        <title>Ca(2+)/Calmodulin-dependent protein kinase cascade in Caenorhabditis elegans. Implication in transcriptional activation.</title>
        <authorList>
            <person name="Eto K."/>
            <person name="Takahashi N."/>
            <person name="Kimura Y."/>
            <person name="Masuho Y."/>
            <person name="Arai K."/>
            <person name="Muramatsu M.A."/>
            <person name="Tokumitsu H."/>
        </authorList>
    </citation>
    <scope>FUNCTION</scope>
    <scope>CATALYTIC ACTIVITY</scope>
    <scope>COFACTOR</scope>
    <scope>ACTIVITY REGULATION</scope>
</reference>
<reference evidence="10" key="5">
    <citation type="journal article" date="2002" name="EMBO Rep.">
        <title>A CaMK cascade activates CRE-mediated transcription in neurons of Caenorhabditis elegans.</title>
        <authorList>
            <person name="Kimura Y."/>
            <person name="Corcoran E.E."/>
            <person name="Eto K."/>
            <person name="Gengyo-Ando K."/>
            <person name="Muramatsu M.A."/>
            <person name="Kobayashi R."/>
            <person name="Freedman J.H."/>
            <person name="Mitani S."/>
            <person name="Hagiwara M."/>
            <person name="Means A.R."/>
            <person name="Tokumitsu H."/>
        </authorList>
    </citation>
    <scope>FUNCTION</scope>
    <scope>CATALYTIC ACTIVITY</scope>
    <scope>COFACTOR</scope>
    <scope>TISSUE SPECIFICITY</scope>
</reference>
<reference evidence="10" key="6">
    <citation type="journal article" date="2018" name="J. Neurosci.">
        <title>Loss of CaMKI Function Disrupts Salt Aversive Learning in C. elegans.</title>
        <authorList>
            <person name="Lim J.P."/>
            <person name="Fehlauer H."/>
            <person name="Das A."/>
            <person name="Saro G."/>
            <person name="Glauser D.A."/>
            <person name="Brunet A."/>
            <person name="Goodman M.B."/>
        </authorList>
    </citation>
    <scope>FUNCTION</scope>
    <scope>DISRUPTION PHENOTYPE</scope>
</reference>
<reference evidence="10" key="7">
    <citation type="journal article" date="2023" name="Elife">
        <title>Multiple antagonist calcium-dependent mechanisms control CaM kinase-1 subcellular localization in a C. elegans thermal nociceptor.</title>
        <authorList>
            <person name="Ippolito D."/>
            <person name="Glauser D.A."/>
        </authorList>
    </citation>
    <scope>SUBCELLULAR LOCATION</scope>
</reference>
<name>KKCC_CAEEL</name>
<protein>
    <recommendedName>
        <fullName evidence="9">Calcium/calmodulin-dependent protein kinase kinase</fullName>
        <shortName evidence="9">CaM-KK</shortName>
        <shortName evidence="1">CaM-kinase kinase</shortName>
        <ecNumber evidence="4 5 6">2.7.11.17</ecNumber>
    </recommendedName>
</protein>
<evidence type="ECO:0000250" key="1">
    <source>
        <dbReference type="UniProtKB" id="P97756"/>
    </source>
</evidence>
<evidence type="ECO:0000255" key="2">
    <source>
        <dbReference type="PROSITE-ProRule" id="PRU00159"/>
    </source>
</evidence>
<evidence type="ECO:0000256" key="3">
    <source>
        <dbReference type="SAM" id="MobiDB-lite"/>
    </source>
</evidence>
<evidence type="ECO:0000269" key="4">
    <source>
    </source>
</evidence>
<evidence type="ECO:0000269" key="5">
    <source>
    </source>
</evidence>
<evidence type="ECO:0000269" key="6">
    <source>
    </source>
</evidence>
<evidence type="ECO:0000269" key="7">
    <source>
    </source>
</evidence>
<evidence type="ECO:0000269" key="8">
    <source>
    </source>
</evidence>
<evidence type="ECO:0000303" key="9">
    <source>
    </source>
</evidence>
<evidence type="ECO:0000305" key="10"/>
<evidence type="ECO:0000312" key="11">
    <source>
        <dbReference type="EMBL" id="BAA77824.4"/>
    </source>
</evidence>
<evidence type="ECO:0000312" key="12">
    <source>
        <dbReference type="Proteomes" id="UP000001940"/>
    </source>
</evidence>
<evidence type="ECO:0000312" key="13">
    <source>
        <dbReference type="WormBase" id="C05H8.1a"/>
    </source>
</evidence>
<evidence type="ECO:0000312" key="14">
    <source>
        <dbReference type="WormBase" id="C05H8.1b"/>
    </source>
</evidence>
<evidence type="ECO:0007829" key="15">
    <source>
        <dbReference type="PDB" id="1IQ5"/>
    </source>
</evidence>
<sequence length="541" mass="60804">MKNTFARYSLTIPSIPENVISHLRQWNEWMVGDTSDDSPGPSSTVSTMTTTGTVDRRSLLSAASMVRQQSDTTGVRRLVRARAVQEDDEAGPHSSNNLAATMSPNLSRPTRYVKSVSQQRSESYIQLNQYRLMEEIGQGSYGIVKLAYNEEDKNLYALKVLDKMKLLKNFACFRQPPPRRNKENAAPSVLRNPLQLVQKEIAILKKLSHPNVVKLVEVLDDPNDNYLYMVFEFVEKGSILEIPTDKPLDEDTAWSYFRDTLCGLEYLHYQKIVHRDIKPSNLLLSDIGQVKIADFGVSCEFEGIDAFLSGTAGTPAFMAPEALTEGANHFYSGRAQDIWSLGITLYAFVIGTVPFVDNYIIALHKKIKNDPIVFPEAPILSEALQDIILGMLKKDPGHRLMLHEVKVHTWVTRDGTVPMSSEQENCHLVTVTEEEIENCVRVIPRLDTLILVKAMGHRKRFGNPFRNKLSAQSSIRDRRKSSSVKDPTYVPPPNSPPATSNNNLNSTKVDRPEIKCIEMNLSGLTLKVDEAMQSKVESARQ</sequence>